<comment type="function">
    <text evidence="1 2 3 4 7">Mitochondrial DNA endonuclease involved in intron homing. It introduces a specific double-strand break at the junction of the two exons a4-a5 of the COX1 gene and thus mediates the insertion of an intron, containing its own coding sequence (group I intron), into an intronless gene. Recognizes with limited specificity and cleaves the sequence 5'-TTTGGTCACCCTGAAGTA-3'. The protein may acquire mRNA maturase activity, like the closely related bI4, through a single amino acid substitution Glu-362 to Lys or when present together with a mutant form of the imported mitochondrial leucyl-tRNA synthetase NAM2.</text>
</comment>
<comment type="cofactor">
    <cofactor evidence="1">
        <name>Mg(2+)</name>
        <dbReference type="ChEBI" id="CHEBI:18420"/>
    </cofactor>
    <cofactor evidence="1">
        <name>Mn(2+)</name>
        <dbReference type="ChEBI" id="CHEBI:29035"/>
    </cofactor>
</comment>
<comment type="subunit">
    <text evidence="8">Homodimer.</text>
</comment>
<comment type="subcellular location">
    <subcellularLocation>
        <location>Mitochondrion</location>
    </subcellularLocation>
</comment>
<comment type="PTM">
    <text evidence="1 2 7">The mature protein may arise from proteolytic cleavage of an in-frame translation of COX1 exons 1 to 4 plus intron 4, containing the aI4 open reading frame. Cleavage would take place close to the Met-299 resulting in an active endonuclease of about 30 kDa.</text>
</comment>
<comment type="miscellaneous">
    <text>Residues 299 to 556 are sufficient for endonuclease and intron homing activity.</text>
</comment>
<comment type="similarity">
    <text evidence="8">In the C-terminal section; belongs to the LAGLIDADG endonuclease family.</text>
</comment>
<comment type="similarity">
    <text evidence="8">In the N-terminal section; belongs to the heme-copper respiratory oxidase family.</text>
</comment>
<comment type="sequence caution" evidence="8">
    <conflict type="erroneous gene model prediction">
        <sequence resource="EMBL-CDS" id="CAA24064"/>
    </conflict>
    <text>COX1 was not predicted to be expressed alternatively as a fusion with intron 4.</text>
</comment>
<comment type="sequence caution" evidence="8">
    <conflict type="erroneous gene model prediction">
        <sequence resource="EMBL-CDS" id="CAA24070"/>
    </conflict>
    <text>COX1 was not predicted to be expressed alternatively as a fusion with intron 4.</text>
</comment>
<gene>
    <name type="primary">AI4</name>
    <name type="synonym">ENS2</name>
    <name type="synonym">I-SCEII</name>
    <name type="ordered locus">Q0065</name>
</gene>
<reference key="1">
    <citation type="journal article" date="1980" name="J. Biol. Chem.">
        <title>Assembly of the mitochondrial membrane system. Structure and nucleotide sequence of the gene coding for subunit 1 of yeast cytochrome oxidase.</title>
        <authorList>
            <person name="Bonitz S.G."/>
            <person name="Coruzzi G."/>
            <person name="Thalenfeld B.E."/>
            <person name="Tzagoloff A."/>
            <person name="Macino G."/>
        </authorList>
    </citation>
    <scope>NUCLEOTIDE SEQUENCE [GENOMIC DNA]</scope>
    <scope>VARIANT 457-ILE-SER-458 DELINS LYS-THR</scope>
    <source>
        <strain>ATCC 24657 / D273-10B</strain>
    </source>
</reference>
<reference key="2">
    <citation type="journal article" date="1998" name="FEBS Lett.">
        <title>The complete sequence of the mitochondrial genome of Saccharomyces cerevisiae.</title>
        <authorList>
            <person name="Foury F."/>
            <person name="Roganti T."/>
            <person name="Lecrenier N."/>
            <person name="Purnelle B."/>
        </authorList>
    </citation>
    <scope>NUCLEOTIDE SEQUENCE [LARGE SCALE GENOMIC DNA]</scope>
    <source>
        <strain>ATCC 96604 / S288c / FY1679</strain>
    </source>
</reference>
<reference key="3">
    <citation type="journal article" date="2014" name="G3 (Bethesda)">
        <title>The reference genome sequence of Saccharomyces cerevisiae: Then and now.</title>
        <authorList>
            <person name="Engel S.R."/>
            <person name="Dietrich F.S."/>
            <person name="Fisk D.G."/>
            <person name="Binkley G."/>
            <person name="Balakrishnan R."/>
            <person name="Costanzo M.C."/>
            <person name="Dwight S.S."/>
            <person name="Hitz B.C."/>
            <person name="Karra K."/>
            <person name="Nash R.S."/>
            <person name="Weng S."/>
            <person name="Wong E.D."/>
            <person name="Lloyd P."/>
            <person name="Skrzypek M.S."/>
            <person name="Miyasato S.R."/>
            <person name="Simison M."/>
            <person name="Cherry J.M."/>
        </authorList>
    </citation>
    <scope>GENOME REANNOTATION</scope>
    <source>
        <strain>ATCC 96604 / S288c / FY1679</strain>
    </source>
</reference>
<reference key="4">
    <citation type="journal article" date="1982" name="Nature">
        <title>Single base substitution in an intron of oxidase gene compensates splicing defects of the cytochrome b gene.</title>
        <authorList>
            <person name="Dujardin G."/>
            <person name="Jacq C."/>
            <person name="Slonimski P.P."/>
        </authorList>
    </citation>
    <scope>NUCLEOTIDE SEQUENCE [GENOMIC DNA] OF 245-531</scope>
    <scope>MUTAGENESIS OF GLU-362</scope>
    <scope>MRNA MATURASE ACTIVITY</scope>
</reference>
<reference key="5">
    <citation type="journal article" date="1992" name="Mol. Cell. Biol.">
        <title>Connections between RNA splicing and DNA intron mobility in yeast mitochondria: RNA maturase and DNA endonuclease switching experiments.</title>
        <authorList>
            <person name="Goguel V."/>
            <person name="Delahodde A."/>
            <person name="Jacq C."/>
        </authorList>
    </citation>
    <scope>NUCLEOTIDE SEQUENCE [GENOMIC DNA] OF 299-556</scope>
    <source>
        <strain>ATCC 201238 / W303-1B</strain>
    </source>
</reference>
<reference key="6">
    <citation type="journal article" date="1989" name="Cell">
        <title>Site-specific DNA endonuclease and RNA maturase activities of two homologous intron-encoded proteins from yeast mitochondria.</title>
        <authorList>
            <person name="Delahodde A."/>
            <person name="Goguel V."/>
            <person name="Becam A.-M."/>
            <person name="Creusot F."/>
            <person name="Perea J."/>
            <person name="Banroques J."/>
            <person name="Jacq C."/>
        </authorList>
    </citation>
    <scope>FUNCTION</scope>
    <scope>ENDONUCLEASE AND MRNA MATURASE ACTIVITY</scope>
</reference>
<reference key="7">
    <citation type="journal article" date="1989" name="Cell">
        <title>A latent intron-encoded maturase is also an endonuclease needed for intron mobility.</title>
        <authorList>
            <person name="Wenzlau J.M."/>
            <person name="Saldanha R.J."/>
            <person name="Butow R.A."/>
            <person name="Perlman P.S."/>
        </authorList>
    </citation>
    <scope>FUNCTION</scope>
    <scope>INTRON HOMING</scope>
</reference>
<reference key="8">
    <citation type="journal article" date="1990" name="J. Biol. Chem.">
        <title>Purification of a site-specific endonuclease, I-Sce II, encoded by intron 4 alpha of the mitochondrial coxI gene of Saccharomyces cerevisiae.</title>
        <authorList>
            <person name="Wernette C.M."/>
            <person name="Saldanha R.J."/>
            <person name="Perlman P.S."/>
            <person name="Butow R.A."/>
        </authorList>
    </citation>
    <scope>FUNCTION</scope>
    <scope>COFACTOR</scope>
    <scope>DIMERIZATION</scope>
    <scope>PROTEOLYTIC CLEAVAGE</scope>
</reference>
<reference key="9">
    <citation type="journal article" date="1990" name="Nucleic Acids Res.">
        <title>In vivo and in vitro analyses of an intron-encoded DNA endonuclease from yeast mitochondria. Recognition site by site-directed mutagenesis.</title>
        <authorList>
            <person name="Sargueil B."/>
            <person name="Hatat D."/>
            <person name="Delahodde A."/>
            <person name="Jacq C."/>
        </authorList>
    </citation>
    <scope>FUNCTION</scope>
    <scope>CLEAVAGE SITE SPECIFICITY</scope>
</reference>
<reference key="10">
    <citation type="journal article" date="1993" name="Annu. Rev. Biochem.">
        <title>Introns as mobile genetic elements.</title>
        <authorList>
            <person name="Lambowitz A.M."/>
            <person name="Belfort M."/>
        </authorList>
    </citation>
    <scope>FUNCTION</scope>
    <scope>PROTEOLYTIC CLEAVAGE</scope>
</reference>
<sequence>MVQRWLYSTNAKDIAVLYFMLAIFSGMAGTAMSLIIRLELAAPGSQYLHGNSQLFNVLVVGHAVLMIFFLVMPALIGGFGNYLLPLMIGATDTAFPRINNIAFWVLPMGLVCLVTSTLVESGAGTGWTVYPPLSSIQAHSGPSVDLAIFALHLTSISSLLGAINFIVTTLNMRTNGMTMHKLPLFVWSIFITAFLLLLSLPVLSAGITMLLLDRNFNTSFFEVSGGGDPILYEHLFWFFGQTVATIIMLMMYNDMHFSKCWKLLKKWITNIMSTLFKALFVKMFMSYNNQQDKMMNNTMLKKDNIKRSSETTRKMLNNSMNKKFNQWLAGLIDGDGYFGIVSKKYVSLEITVALEDEMALKEIQNKFGGSIKLRSGVKAIRYRLTNKTGMIKLINAVNGNIRNTKRLVQFNKVCILLGIDFIYPIKLTKDNSWFVGFFDADGTINYSFKNNHPQLTISVTNKYLQDVQEYKNILGGNIYFDKSQNGYYKWSIQSKDMVLNFINDYIKMNPSRTTKMNKLYLSKEFYNLKELKAYNKSSDSMQYKAWLNFENKWKNK</sequence>
<dbReference type="EC" id="3.1.-.-"/>
<dbReference type="EMBL" id="V00694">
    <property type="protein sequence ID" value="CAA24070.1"/>
    <property type="status" value="ALT_SEQ"/>
    <property type="molecule type" value="Genomic_DNA"/>
</dbReference>
<dbReference type="EMBL" id="V00694">
    <property type="protein sequence ID" value="CAA24064.1"/>
    <property type="status" value="ALT_SEQ"/>
    <property type="molecule type" value="Genomic_DNA"/>
</dbReference>
<dbReference type="EMBL" id="KP263414">
    <property type="protein sequence ID" value="AIZ98883.1"/>
    <property type="molecule type" value="Genomic_DNA"/>
</dbReference>
<dbReference type="EMBL" id="V00703">
    <property type="protein sequence ID" value="CAA24076.1"/>
    <property type="molecule type" value="Genomic_DNA"/>
</dbReference>
<dbReference type="EMBL" id="S76641">
    <property type="protein sequence ID" value="AAB21126.1"/>
    <property type="molecule type" value="Genomic_DNA"/>
</dbReference>
<dbReference type="PIR" id="S26762">
    <property type="entry name" value="S26762"/>
</dbReference>
<dbReference type="PIR" id="S78649">
    <property type="entry name" value="QXBY34"/>
</dbReference>
<dbReference type="RefSeq" id="NP_009307.2">
    <property type="nucleotide sequence ID" value="NC_001224.1"/>
</dbReference>
<dbReference type="SMR" id="P03878"/>
<dbReference type="BioGRID" id="34788">
    <property type="interactions" value="2"/>
</dbReference>
<dbReference type="FunCoup" id="P03878">
    <property type="interactions" value="14"/>
</dbReference>
<dbReference type="STRING" id="4932.Q0065"/>
<dbReference type="REBASE" id="2616">
    <property type="entry name" value="I-SceII"/>
</dbReference>
<dbReference type="PaxDb" id="4932-Q0065"/>
<dbReference type="PeptideAtlas" id="P03878"/>
<dbReference type="EnsemblFungi" id="Q0065_mRNA">
    <property type="protein sequence ID" value="Q0065"/>
    <property type="gene ID" value="Q0065"/>
</dbReference>
<dbReference type="GeneID" id="854596"/>
<dbReference type="KEGG" id="sce:Q0065"/>
<dbReference type="AGR" id="SGD:S000007264"/>
<dbReference type="SGD" id="S000007264">
    <property type="gene designation" value="AI4"/>
</dbReference>
<dbReference type="VEuPathDB" id="FungiDB:Q0065"/>
<dbReference type="eggNOG" id="KOG4769">
    <property type="taxonomic scope" value="Eukaryota"/>
</dbReference>
<dbReference type="GeneTree" id="ENSGT00390000001518"/>
<dbReference type="HOGENOM" id="CLU_490203_0_0_1"/>
<dbReference type="InParanoid" id="P03878"/>
<dbReference type="OrthoDB" id="4905839at2759"/>
<dbReference type="BioCyc" id="YEAST:G3O-34375-MONOMER"/>
<dbReference type="PRO" id="PR:P03878"/>
<dbReference type="Proteomes" id="UP000002311">
    <property type="component" value="Mitochondrion"/>
</dbReference>
<dbReference type="RNAct" id="P03878">
    <property type="molecule type" value="protein"/>
</dbReference>
<dbReference type="GO" id="GO:0005739">
    <property type="term" value="C:mitochondrion"/>
    <property type="evidence" value="ECO:0000304"/>
    <property type="project" value="SGD"/>
</dbReference>
<dbReference type="GO" id="GO:0045277">
    <property type="term" value="C:respiratory chain complex IV"/>
    <property type="evidence" value="ECO:0000318"/>
    <property type="project" value="GO_Central"/>
</dbReference>
<dbReference type="GO" id="GO:0004129">
    <property type="term" value="F:cytochrome-c oxidase activity"/>
    <property type="evidence" value="ECO:0007669"/>
    <property type="project" value="InterPro"/>
</dbReference>
<dbReference type="GO" id="GO:0004519">
    <property type="term" value="F:endonuclease activity"/>
    <property type="evidence" value="ECO:0000314"/>
    <property type="project" value="SGD"/>
</dbReference>
<dbReference type="GO" id="GO:0020037">
    <property type="term" value="F:heme binding"/>
    <property type="evidence" value="ECO:0007669"/>
    <property type="project" value="InterPro"/>
</dbReference>
<dbReference type="GO" id="GO:0009060">
    <property type="term" value="P:aerobic respiration"/>
    <property type="evidence" value="ECO:0000318"/>
    <property type="project" value="GO_Central"/>
</dbReference>
<dbReference type="GO" id="GO:0006314">
    <property type="term" value="P:intron homing"/>
    <property type="evidence" value="ECO:0000315"/>
    <property type="project" value="SGD"/>
</dbReference>
<dbReference type="GO" id="GO:0006397">
    <property type="term" value="P:mRNA processing"/>
    <property type="evidence" value="ECO:0007669"/>
    <property type="project" value="UniProtKB-KW"/>
</dbReference>
<dbReference type="GO" id="GO:0022904">
    <property type="term" value="P:respiratory electron transport chain"/>
    <property type="evidence" value="ECO:0000318"/>
    <property type="project" value="GO_Central"/>
</dbReference>
<dbReference type="GO" id="GO:0008380">
    <property type="term" value="P:RNA splicing"/>
    <property type="evidence" value="ECO:0000314"/>
    <property type="project" value="SGD"/>
</dbReference>
<dbReference type="FunFam" id="1.20.210.10:FF:000014">
    <property type="entry name" value="Probable intron-encoded endonuclease aI4"/>
    <property type="match status" value="1"/>
</dbReference>
<dbReference type="FunFam" id="3.10.28.10:FF:000025">
    <property type="entry name" value="Probable intron-encoded endonuclease aI8"/>
    <property type="match status" value="1"/>
</dbReference>
<dbReference type="Gene3D" id="1.20.210.10">
    <property type="entry name" value="Cytochrome c oxidase-like, subunit I domain"/>
    <property type="match status" value="1"/>
</dbReference>
<dbReference type="Gene3D" id="3.10.28.10">
    <property type="entry name" value="Homing endonucleases"/>
    <property type="match status" value="2"/>
</dbReference>
<dbReference type="InterPro" id="IPR023616">
    <property type="entry name" value="Cyt_c_oxase-like_su1_dom"/>
</dbReference>
<dbReference type="InterPro" id="IPR036927">
    <property type="entry name" value="Cyt_c_oxase-like_su1_sf"/>
</dbReference>
<dbReference type="InterPro" id="IPR000883">
    <property type="entry name" value="Cyt_C_Oxase_1"/>
</dbReference>
<dbReference type="InterPro" id="IPR027434">
    <property type="entry name" value="Homing_endonucl"/>
</dbReference>
<dbReference type="InterPro" id="IPR004860">
    <property type="entry name" value="LAGLIDADG_dom"/>
</dbReference>
<dbReference type="PANTHER" id="PTHR10422">
    <property type="entry name" value="CYTOCHROME C OXIDASE SUBUNIT 1"/>
    <property type="match status" value="1"/>
</dbReference>
<dbReference type="PANTHER" id="PTHR10422:SF18">
    <property type="entry name" value="CYTOCHROME C OXIDASE SUBUNIT 1"/>
    <property type="match status" value="1"/>
</dbReference>
<dbReference type="Pfam" id="PF00115">
    <property type="entry name" value="COX1"/>
    <property type="match status" value="1"/>
</dbReference>
<dbReference type="Pfam" id="PF00961">
    <property type="entry name" value="LAGLIDADG_1"/>
    <property type="match status" value="2"/>
</dbReference>
<dbReference type="PRINTS" id="PR01165">
    <property type="entry name" value="CYCOXIDASEI"/>
</dbReference>
<dbReference type="SUPFAM" id="SSF81442">
    <property type="entry name" value="Cytochrome c oxidase subunit I-like"/>
    <property type="match status" value="1"/>
</dbReference>
<dbReference type="SUPFAM" id="SSF55608">
    <property type="entry name" value="Homing endonucleases"/>
    <property type="match status" value="2"/>
</dbReference>
<dbReference type="PROSITE" id="PS50855">
    <property type="entry name" value="COX1"/>
    <property type="match status" value="1"/>
</dbReference>
<proteinExistence type="evidence at protein level"/>
<evidence type="ECO:0000269" key="1">
    <source>
    </source>
</evidence>
<evidence type="ECO:0000269" key="2">
    <source>
    </source>
</evidence>
<evidence type="ECO:0000269" key="3">
    <source>
    </source>
</evidence>
<evidence type="ECO:0000269" key="4">
    <source>
    </source>
</evidence>
<evidence type="ECO:0000269" key="5">
    <source>
    </source>
</evidence>
<evidence type="ECO:0000269" key="6">
    <source>
    </source>
</evidence>
<evidence type="ECO:0000269" key="7">
    <source>
    </source>
</evidence>
<evidence type="ECO:0000305" key="8"/>
<keyword id="KW-0255">Endonuclease</keyword>
<keyword id="KW-0378">Hydrolase</keyword>
<keyword id="KW-0404">Intron homing</keyword>
<keyword id="KW-0496">Mitochondrion</keyword>
<keyword id="KW-0507">mRNA processing</keyword>
<keyword id="KW-0508">mRNA splicing</keyword>
<keyword id="KW-0540">Nuclease</keyword>
<keyword id="KW-1185">Reference proteome</keyword>
<organism>
    <name type="scientific">Saccharomyces cerevisiae (strain ATCC 204508 / S288c)</name>
    <name type="common">Baker's yeast</name>
    <dbReference type="NCBI Taxonomy" id="559292"/>
    <lineage>
        <taxon>Eukaryota</taxon>
        <taxon>Fungi</taxon>
        <taxon>Dikarya</taxon>
        <taxon>Ascomycota</taxon>
        <taxon>Saccharomycotina</taxon>
        <taxon>Saccharomycetes</taxon>
        <taxon>Saccharomycetales</taxon>
        <taxon>Saccharomycetaceae</taxon>
        <taxon>Saccharomyces</taxon>
    </lineage>
</organism>
<protein>
    <recommendedName>
        <fullName>Intron-encoded DNA endonuclease aI4</fullName>
    </recommendedName>
    <alternativeName>
        <fullName>DNA endonuclease I-SceII</fullName>
    </alternativeName>
    <component>
        <recommendedName>
            <fullName>Truncated non-functional cytochrome oxidase 1</fullName>
        </recommendedName>
    </component>
    <component>
        <recommendedName>
            <fullName>DNA endonuclease aI4</fullName>
            <ecNumber>3.1.-.-</ecNumber>
        </recommendedName>
        <alternativeName>
            <fullName>Intron-encoded endonuclease I-SceII</fullName>
        </alternativeName>
    </component>
</protein>
<geneLocation type="mitochondrion"/>
<accession>P03878</accession>
<accession>A0A0A7P354</accession>
<accession>Q02339</accession>
<accession>Q35798</accession>
<accession>Q9ZZX2</accession>
<feature type="chain" id="PRO_0000013489" description="Truncated non-functional cytochrome oxidase 1">
    <location>
        <begin position="1"/>
        <end status="unknown"/>
    </location>
</feature>
<feature type="chain" id="PRO_0000013490" description="DNA endonuclease aI4">
    <location>
        <begin status="unknown"/>
        <end position="556"/>
    </location>
</feature>
<feature type="region of interest" description="COX1 exons 1 to 4 encoded">
    <location>
        <begin position="1"/>
        <end position="240"/>
    </location>
</feature>
<feature type="region of interest" description="COX1 intron 4 encoded">
    <location>
        <begin position="241"/>
        <end position="556"/>
    </location>
</feature>
<feature type="sequence variant" description="In strain: D273-10B." evidence="5">
    <original>IS</original>
    <variation>KT</variation>
    <location>
        <begin position="457"/>
        <end position="458"/>
    </location>
</feature>
<feature type="mutagenesis site" description="Confers mRNA maturase activity." evidence="6">
    <original>E</original>
    <variation>K</variation>
    <location>
        <position position="362"/>
    </location>
</feature>
<feature type="sequence conflict" description="In Ref. 1; CAA24070." evidence="8" ref="1">
    <location>
        <position position="57"/>
    </location>
</feature>
<feature type="sequence conflict" description="In Ref. 1; CAA24070." evidence="8" ref="1">
    <original>F</original>
    <variation>CT</variation>
    <location>
        <position position="69"/>
    </location>
</feature>
<feature type="sequence conflict" description="In Ref. 1; CAA24070." evidence="8" ref="1">
    <original>S</original>
    <variation>A</variation>
    <location>
        <position position="224"/>
    </location>
</feature>
<feature type="sequence conflict" description="In Ref. 5; AAB21126." evidence="8" ref="5">
    <original>M</original>
    <variation>I</variation>
    <location>
        <position position="315"/>
    </location>
</feature>
<feature type="sequence conflict" description="In Ref. 5; AAB21126." evidence="8" ref="5">
    <original>M</original>
    <variation>I</variation>
    <location>
        <position position="320"/>
    </location>
</feature>
<name>SCE2_YEAST</name>